<gene>
    <name evidence="1" type="primary">kdsB</name>
    <name type="ordered locus">BBta_7057</name>
</gene>
<evidence type="ECO:0000255" key="1">
    <source>
        <dbReference type="HAMAP-Rule" id="MF_00057"/>
    </source>
</evidence>
<protein>
    <recommendedName>
        <fullName evidence="1">3-deoxy-manno-octulosonate cytidylyltransferase</fullName>
        <ecNumber evidence="1">2.7.7.38</ecNumber>
    </recommendedName>
    <alternativeName>
        <fullName evidence="1">CMP-2-keto-3-deoxyoctulosonic acid synthase</fullName>
        <shortName evidence="1">CKS</shortName>
        <shortName evidence="1">CMP-KDO synthase</shortName>
    </alternativeName>
</protein>
<comment type="function">
    <text evidence="1">Activates KDO (a required 8-carbon sugar) for incorporation into bacterial lipopolysaccharide in Gram-negative bacteria.</text>
</comment>
<comment type="catalytic activity">
    <reaction evidence="1">
        <text>3-deoxy-alpha-D-manno-oct-2-ulosonate + CTP = CMP-3-deoxy-beta-D-manno-octulosonate + diphosphate</text>
        <dbReference type="Rhea" id="RHEA:23448"/>
        <dbReference type="ChEBI" id="CHEBI:33019"/>
        <dbReference type="ChEBI" id="CHEBI:37563"/>
        <dbReference type="ChEBI" id="CHEBI:85986"/>
        <dbReference type="ChEBI" id="CHEBI:85987"/>
        <dbReference type="EC" id="2.7.7.38"/>
    </reaction>
</comment>
<comment type="pathway">
    <text evidence="1">Nucleotide-sugar biosynthesis; CMP-3-deoxy-D-manno-octulosonate biosynthesis; CMP-3-deoxy-D-manno-octulosonate from 3-deoxy-D-manno-octulosonate and CTP: step 1/1.</text>
</comment>
<comment type="pathway">
    <text evidence="1">Bacterial outer membrane biogenesis; lipopolysaccharide biosynthesis.</text>
</comment>
<comment type="subcellular location">
    <subcellularLocation>
        <location evidence="1">Cytoplasm</location>
    </subcellularLocation>
</comment>
<comment type="similarity">
    <text evidence="1">Belongs to the KdsB family.</text>
</comment>
<organism>
    <name type="scientific">Bradyrhizobium sp. (strain BTAi1 / ATCC BAA-1182)</name>
    <dbReference type="NCBI Taxonomy" id="288000"/>
    <lineage>
        <taxon>Bacteria</taxon>
        <taxon>Pseudomonadati</taxon>
        <taxon>Pseudomonadota</taxon>
        <taxon>Alphaproteobacteria</taxon>
        <taxon>Hyphomicrobiales</taxon>
        <taxon>Nitrobacteraceae</taxon>
        <taxon>Bradyrhizobium</taxon>
    </lineage>
</organism>
<name>KDSB_BRASB</name>
<dbReference type="EC" id="2.7.7.38" evidence="1"/>
<dbReference type="EMBL" id="CP000494">
    <property type="protein sequence ID" value="ABQ38940.1"/>
    <property type="molecule type" value="Genomic_DNA"/>
</dbReference>
<dbReference type="RefSeq" id="WP_012046869.1">
    <property type="nucleotide sequence ID" value="NC_009485.1"/>
</dbReference>
<dbReference type="SMR" id="A5ERZ6"/>
<dbReference type="STRING" id="288000.BBta_7057"/>
<dbReference type="KEGG" id="bbt:BBta_7057"/>
<dbReference type="eggNOG" id="COG1212">
    <property type="taxonomic scope" value="Bacteria"/>
</dbReference>
<dbReference type="HOGENOM" id="CLU_065038_0_1_5"/>
<dbReference type="OrthoDB" id="9815559at2"/>
<dbReference type="UniPathway" id="UPA00030"/>
<dbReference type="UniPathway" id="UPA00358">
    <property type="reaction ID" value="UER00476"/>
</dbReference>
<dbReference type="Proteomes" id="UP000000246">
    <property type="component" value="Chromosome"/>
</dbReference>
<dbReference type="GO" id="GO:0005829">
    <property type="term" value="C:cytosol"/>
    <property type="evidence" value="ECO:0007669"/>
    <property type="project" value="TreeGrafter"/>
</dbReference>
<dbReference type="GO" id="GO:0008690">
    <property type="term" value="F:3-deoxy-manno-octulosonate cytidylyltransferase activity"/>
    <property type="evidence" value="ECO:0007669"/>
    <property type="project" value="UniProtKB-UniRule"/>
</dbReference>
<dbReference type="GO" id="GO:0033468">
    <property type="term" value="P:CMP-keto-3-deoxy-D-manno-octulosonic acid biosynthetic process"/>
    <property type="evidence" value="ECO:0007669"/>
    <property type="project" value="UniProtKB-UniRule"/>
</dbReference>
<dbReference type="GO" id="GO:0009103">
    <property type="term" value="P:lipopolysaccharide biosynthetic process"/>
    <property type="evidence" value="ECO:0007669"/>
    <property type="project" value="UniProtKB-UniRule"/>
</dbReference>
<dbReference type="CDD" id="cd02517">
    <property type="entry name" value="CMP-KDO-Synthetase"/>
    <property type="match status" value="1"/>
</dbReference>
<dbReference type="Gene3D" id="3.90.550.10">
    <property type="entry name" value="Spore Coat Polysaccharide Biosynthesis Protein SpsA, Chain A"/>
    <property type="match status" value="1"/>
</dbReference>
<dbReference type="HAMAP" id="MF_00057">
    <property type="entry name" value="KdsB"/>
    <property type="match status" value="1"/>
</dbReference>
<dbReference type="InterPro" id="IPR003329">
    <property type="entry name" value="Cytidylyl_trans"/>
</dbReference>
<dbReference type="InterPro" id="IPR004528">
    <property type="entry name" value="KdsB"/>
</dbReference>
<dbReference type="InterPro" id="IPR029044">
    <property type="entry name" value="Nucleotide-diphossugar_trans"/>
</dbReference>
<dbReference type="NCBIfam" id="TIGR00466">
    <property type="entry name" value="kdsB"/>
    <property type="match status" value="1"/>
</dbReference>
<dbReference type="NCBIfam" id="NF003948">
    <property type="entry name" value="PRK05450.1-1"/>
    <property type="match status" value="1"/>
</dbReference>
<dbReference type="NCBIfam" id="NF003952">
    <property type="entry name" value="PRK05450.1-5"/>
    <property type="match status" value="1"/>
</dbReference>
<dbReference type="PANTHER" id="PTHR42866">
    <property type="entry name" value="3-DEOXY-MANNO-OCTULOSONATE CYTIDYLYLTRANSFERASE"/>
    <property type="match status" value="1"/>
</dbReference>
<dbReference type="PANTHER" id="PTHR42866:SF2">
    <property type="entry name" value="3-DEOXY-MANNO-OCTULOSONATE CYTIDYLYLTRANSFERASE, MITOCHONDRIAL"/>
    <property type="match status" value="1"/>
</dbReference>
<dbReference type="Pfam" id="PF02348">
    <property type="entry name" value="CTP_transf_3"/>
    <property type="match status" value="1"/>
</dbReference>
<dbReference type="SUPFAM" id="SSF53448">
    <property type="entry name" value="Nucleotide-diphospho-sugar transferases"/>
    <property type="match status" value="1"/>
</dbReference>
<accession>A5ERZ6</accession>
<keyword id="KW-0963">Cytoplasm</keyword>
<keyword id="KW-0448">Lipopolysaccharide biosynthesis</keyword>
<keyword id="KW-0548">Nucleotidyltransferase</keyword>
<keyword id="KW-1185">Reference proteome</keyword>
<keyword id="KW-0808">Transferase</keyword>
<proteinExistence type="inferred from homology"/>
<reference key="1">
    <citation type="journal article" date="2007" name="Science">
        <title>Legumes symbioses: absence of nod genes in photosynthetic bradyrhizobia.</title>
        <authorList>
            <person name="Giraud E."/>
            <person name="Moulin L."/>
            <person name="Vallenet D."/>
            <person name="Barbe V."/>
            <person name="Cytryn E."/>
            <person name="Avarre J.-C."/>
            <person name="Jaubert M."/>
            <person name="Simon D."/>
            <person name="Cartieaux F."/>
            <person name="Prin Y."/>
            <person name="Bena G."/>
            <person name="Hannibal L."/>
            <person name="Fardoux J."/>
            <person name="Kojadinovic M."/>
            <person name="Vuillet L."/>
            <person name="Lajus A."/>
            <person name="Cruveiller S."/>
            <person name="Rouy Z."/>
            <person name="Mangenot S."/>
            <person name="Segurens B."/>
            <person name="Dossat C."/>
            <person name="Franck W.L."/>
            <person name="Chang W.-S."/>
            <person name="Saunders E."/>
            <person name="Bruce D."/>
            <person name="Richardson P."/>
            <person name="Normand P."/>
            <person name="Dreyfus B."/>
            <person name="Pignol D."/>
            <person name="Stacey G."/>
            <person name="Emerich D."/>
            <person name="Vermeglio A."/>
            <person name="Medigue C."/>
            <person name="Sadowsky M."/>
        </authorList>
    </citation>
    <scope>NUCLEOTIDE SEQUENCE [LARGE SCALE GENOMIC DNA]</scope>
    <source>
        <strain>BTAi1 / ATCC BAA-1182</strain>
    </source>
</reference>
<feature type="chain" id="PRO_0000370009" description="3-deoxy-manno-octulosonate cytidylyltransferase">
    <location>
        <begin position="1"/>
        <end position="246"/>
    </location>
</feature>
<sequence>MTQPKILVLIPARMASTRLPGKPLLDIAGLPMIVQVLRRAQEANIGRVAVATDTKEIADAVIAHGGEAVMTRPDHPSGSDRIYEASCKLDPAGEAEIVVNLQGDFPTILPQNIRDVLLPLSDPAVDIATLAAQIHTAEEDAAPSVVKAVGSPIGERRLRALYFTRATAPHGDGPRYHHIGLYAYRRAALERFVSLPPSPLELQEKLEQLRALEAGMRIDIGIVDTVPRGVDTPPDLETARRLLSKA</sequence>